<proteinExistence type="evidence at protein level"/>
<feature type="initiator methionine" description="Removed" evidence="1">
    <location>
        <position position="1"/>
    </location>
</feature>
<feature type="chain" id="PRO_0000199221" description="Phycobilisome 32.1 kDa linker polypeptide, phycocyanin-associated, rod">
    <location>
        <begin position="2"/>
        <end position="287"/>
    </location>
</feature>
<feature type="domain" description="PBS-linker" evidence="3">
    <location>
        <begin position="2"/>
        <end position="180"/>
    </location>
</feature>
<feature type="domain" description="CpcD-like" evidence="2">
    <location>
        <begin position="235"/>
        <end position="287"/>
    </location>
</feature>
<feature type="helix" evidence="4">
    <location>
        <begin position="29"/>
        <end position="39"/>
    </location>
</feature>
<feature type="strand" evidence="4">
    <location>
        <begin position="48"/>
        <end position="52"/>
    </location>
</feature>
<feature type="helix" evidence="4">
    <location>
        <begin position="56"/>
        <end position="63"/>
    </location>
</feature>
<feature type="helix" evidence="4">
    <location>
        <begin position="69"/>
        <end position="77"/>
    </location>
</feature>
<feature type="turn" evidence="4">
    <location>
        <begin position="86"/>
        <end position="88"/>
    </location>
</feature>
<feature type="helix" evidence="4">
    <location>
        <begin position="92"/>
        <end position="103"/>
    </location>
</feature>
<feature type="strand" evidence="4">
    <location>
        <begin position="104"/>
        <end position="106"/>
    </location>
</feature>
<feature type="helix" evidence="4">
    <location>
        <begin position="111"/>
        <end position="123"/>
    </location>
</feature>
<feature type="helix" evidence="4">
    <location>
        <begin position="126"/>
        <end position="135"/>
    </location>
</feature>
<feature type="helix" evidence="4">
    <location>
        <begin position="137"/>
        <end position="143"/>
    </location>
</feature>
<feature type="strand" evidence="4">
    <location>
        <begin position="145"/>
        <end position="148"/>
    </location>
</feature>
<name>PYR1_THEVB</name>
<accession>P50034</accession>
<sequence length="287" mass="32124">MAITAAASRLGTSAFSDAPPVELRANWSEEDLETVIRAVYRQVLGNDYVMASERLVSAESLLRNGKITVREFVRAVAKSELYKEKFLYGNFQTRVIELNYKHLLGRAPYDESEVIFHLDLYENEGFDADIDSYIDSPEYTNSFGDWVVPYYRGFNTQPGQKTVGFNRIFRLYRGYANSDRAQAEGSMSRLARDLATNRANTVVPPSNSDTAFAYYTPSADVPPRACLGGSFGESGRVYRIEVAGIRQPGYPGVRRSSTAFLVPYEQLSAKMQQLQRTGARIISVNPA</sequence>
<protein>
    <recommendedName>
        <fullName>Phycobilisome 32.1 kDa linker polypeptide, phycocyanin-associated, rod</fullName>
    </recommendedName>
</protein>
<evidence type="ECO:0000250" key="1"/>
<evidence type="ECO:0000255" key="2">
    <source>
        <dbReference type="PROSITE-ProRule" id="PRU00771"/>
    </source>
</evidence>
<evidence type="ECO:0000255" key="3">
    <source>
        <dbReference type="PROSITE-ProRule" id="PRU00775"/>
    </source>
</evidence>
<evidence type="ECO:0007829" key="4">
    <source>
        <dbReference type="PDB" id="2L8V"/>
    </source>
</evidence>
<gene>
    <name type="primary">cpcC</name>
    <name type="ordered locus">tlr1959</name>
</gene>
<organism>
    <name type="scientific">Thermosynechococcus vestitus (strain NIES-2133 / IAM M-273 / BP-1)</name>
    <dbReference type="NCBI Taxonomy" id="197221"/>
    <lineage>
        <taxon>Bacteria</taxon>
        <taxon>Bacillati</taxon>
        <taxon>Cyanobacteriota</taxon>
        <taxon>Cyanophyceae</taxon>
        <taxon>Acaryochloridales</taxon>
        <taxon>Thermosynechococcaceae</taxon>
        <taxon>Thermosynechococcus</taxon>
    </lineage>
</organism>
<reference key="1">
    <citation type="submission" date="1992-09" db="EMBL/GenBank/DDBJ databases">
        <title>Cloning and sequencing of the phycocyanin operon from the thermophilic cyanobacterium Synechococcus elongatus.</title>
        <authorList>
            <person name="Shimazu T."/>
            <person name="Soga M."/>
            <person name="Hirano M."/>
            <person name="Katoh S."/>
        </authorList>
    </citation>
    <scope>NUCLEOTIDE SEQUENCE [GENOMIC DNA]</scope>
</reference>
<reference key="2">
    <citation type="journal article" date="2002" name="DNA Res.">
        <title>Complete genome structure of the thermophilic cyanobacterium Thermosynechococcus elongatus BP-1.</title>
        <authorList>
            <person name="Nakamura Y."/>
            <person name="Kaneko T."/>
            <person name="Sato S."/>
            <person name="Ikeuchi M."/>
            <person name="Katoh H."/>
            <person name="Sasamoto S."/>
            <person name="Watanabe A."/>
            <person name="Iriguchi M."/>
            <person name="Kawashima K."/>
            <person name="Kimura T."/>
            <person name="Kishida Y."/>
            <person name="Kiyokawa C."/>
            <person name="Kohara M."/>
            <person name="Matsumoto M."/>
            <person name="Matsuno A."/>
            <person name="Nakazaki N."/>
            <person name="Shimpo S."/>
            <person name="Sugimoto M."/>
            <person name="Takeuchi C."/>
            <person name="Yamada M."/>
            <person name="Tabata S."/>
        </authorList>
    </citation>
    <scope>NUCLEOTIDE SEQUENCE [LARGE SCALE GENOMIC DNA]</scope>
    <source>
        <strain>NIES-2133 / IAM M-273 / BP-1</strain>
    </source>
</reference>
<dbReference type="EMBL" id="D13173">
    <property type="protein sequence ID" value="BAA02457.1"/>
    <property type="molecule type" value="Genomic_DNA"/>
</dbReference>
<dbReference type="EMBL" id="BA000039">
    <property type="protein sequence ID" value="BAC09511.1"/>
    <property type="molecule type" value="Genomic_DNA"/>
</dbReference>
<dbReference type="RefSeq" id="NP_682749.1">
    <property type="nucleotide sequence ID" value="NC_004113.1"/>
</dbReference>
<dbReference type="RefSeq" id="WP_011057794.1">
    <property type="nucleotide sequence ID" value="NC_004113.1"/>
</dbReference>
<dbReference type="PDB" id="2L8V">
    <property type="method" value="NMR"/>
    <property type="chains" value="A=20-153"/>
</dbReference>
<dbReference type="PDB" id="7VEB">
    <property type="method" value="EM"/>
    <property type="resolution" value="4.20 A"/>
    <property type="chains" value="Z=1-287"/>
</dbReference>
<dbReference type="PDBsum" id="2L8V"/>
<dbReference type="PDBsum" id="7VEB"/>
<dbReference type="EMDB" id="EMD-31945"/>
<dbReference type="SMR" id="P50034"/>
<dbReference type="STRING" id="197221.gene:10748566"/>
<dbReference type="EnsemblBacteria" id="BAC09511">
    <property type="protein sequence ID" value="BAC09511"/>
    <property type="gene ID" value="BAC09511"/>
</dbReference>
<dbReference type="KEGG" id="tel:tlr1959"/>
<dbReference type="PATRIC" id="fig|197221.4.peg.2049"/>
<dbReference type="eggNOG" id="COG0237">
    <property type="taxonomic scope" value="Bacteria"/>
</dbReference>
<dbReference type="EvolutionaryTrace" id="P50034"/>
<dbReference type="Proteomes" id="UP000000440">
    <property type="component" value="Chromosome"/>
</dbReference>
<dbReference type="GO" id="GO:0030089">
    <property type="term" value="C:phycobilisome"/>
    <property type="evidence" value="ECO:0007669"/>
    <property type="project" value="UniProtKB-KW"/>
</dbReference>
<dbReference type="GO" id="GO:0031676">
    <property type="term" value="C:plasma membrane-derived thylakoid membrane"/>
    <property type="evidence" value="ECO:0007669"/>
    <property type="project" value="UniProtKB-SubCell"/>
</dbReference>
<dbReference type="GO" id="GO:0015979">
    <property type="term" value="P:photosynthesis"/>
    <property type="evidence" value="ECO:0007669"/>
    <property type="project" value="UniProtKB-KW"/>
</dbReference>
<dbReference type="Gene3D" id="1.10.3130.20">
    <property type="entry name" value="Phycobilisome linker domain"/>
    <property type="match status" value="1"/>
</dbReference>
<dbReference type="InterPro" id="IPR008213">
    <property type="entry name" value="CpcD-like_dom"/>
</dbReference>
<dbReference type="InterPro" id="IPR001297">
    <property type="entry name" value="PBS_linker_dom"/>
</dbReference>
<dbReference type="InterPro" id="IPR038255">
    <property type="entry name" value="PBS_linker_sf"/>
</dbReference>
<dbReference type="InterPro" id="IPR016470">
    <property type="entry name" value="Phycobilisome"/>
</dbReference>
<dbReference type="PANTHER" id="PTHR34011:SF6">
    <property type="entry name" value="PHYCOBILIPROTEIN APCE"/>
    <property type="match status" value="1"/>
</dbReference>
<dbReference type="PANTHER" id="PTHR34011">
    <property type="entry name" value="PHYCOBILISOME 32.1 KDA LINKER POLYPEPTIDE, PHYCOCYANIN-ASSOCIATED, ROD 2-RELATED"/>
    <property type="match status" value="1"/>
</dbReference>
<dbReference type="Pfam" id="PF01383">
    <property type="entry name" value="CpcD"/>
    <property type="match status" value="1"/>
</dbReference>
<dbReference type="Pfam" id="PF00427">
    <property type="entry name" value="PBS_linker_poly"/>
    <property type="match status" value="1"/>
</dbReference>
<dbReference type="PIRSF" id="PIRSF005898">
    <property type="entry name" value="Phycobilisome_CpeC/CpcI"/>
    <property type="match status" value="1"/>
</dbReference>
<dbReference type="SMART" id="SM01094">
    <property type="entry name" value="CpcD"/>
    <property type="match status" value="1"/>
</dbReference>
<dbReference type="PROSITE" id="PS51441">
    <property type="entry name" value="CPCD_LIKE"/>
    <property type="match status" value="1"/>
</dbReference>
<dbReference type="PROSITE" id="PS51445">
    <property type="entry name" value="PBS_LINKER"/>
    <property type="match status" value="1"/>
</dbReference>
<comment type="function">
    <text>Rod linker protein, associated with phycocyanin. Linker polypeptides determine the state of aggregation and the location of the disk-shaped phycobiliprotein units within the phycobilisome and modulate their spectroscopic properties in order to mediate a directed and optimal energy transfer.</text>
</comment>
<comment type="subcellular location">
    <subcellularLocation>
        <location evidence="1">Cellular thylakoid membrane</location>
        <topology evidence="1">Peripheral membrane protein</topology>
        <orientation evidence="1">Cytoplasmic side</orientation>
    </subcellularLocation>
    <text evidence="1">This protein occurs in the rod, it is associated with phycocyanin.</text>
</comment>
<comment type="similarity">
    <text evidence="3">Belongs to the phycobilisome linker protein family.</text>
</comment>
<keyword id="KW-0002">3D-structure</keyword>
<keyword id="KW-0042">Antenna complex</keyword>
<keyword id="KW-0472">Membrane</keyword>
<keyword id="KW-0602">Photosynthesis</keyword>
<keyword id="KW-0605">Phycobilisome</keyword>
<keyword id="KW-1185">Reference proteome</keyword>
<keyword id="KW-0793">Thylakoid</keyword>